<sequence length="1164" mass="125956">MREEGGGSREKEGESPNPPSLTQSRQPASSWGWGEGSGEVRPPHAPSGWGARAQRSRDPGMPPRPPPRQAGGGLSREFGKLLPALSHSPLGGLGSGSGSVAPGQGRAGAMGSRTPGSPLHAVQLRRGARRRPRLLPLLPPLLLLLLPPPPRVGGFNLDAEAPAVLSGPPGSFFGFSVEFYRPGTDGVSVLVGAPKANTSQPGVLQGGAVYLCPWGTSPAQCTPIEFDSKGSRIFESSTSSSEGEEPVEYKSLQWFGATVRAHGSSILACAPLYSWRTEKEPQSDPVGTCYLSTGNFTQILEYAPCRSDFSQEAGQGYCQGGFSAEFTKTGRVVLGGPGSYFWQGQILSATQEQIAESYYPGYLINPVRGQLQTRQASSIYDDSYLGYSVAVGEFSGDDREDFVAGVPKGNLTYGYVTILNGSDIRSLYNFSGEQMASYFGYAVAATDINGDGLDDLLVGAPLLMERTADGRPQEVGRVYIYLQRLAGMEPTPTLTLTGQDEFGRFGSSLTPLGDLDQDGYNDVAIGAAFGGENRQGVVFIFPGGPGGLASKPSQVLLPLWAAGHTPDFFGSALRGGRDLDGNGYPDLIVGSFGVDKAVVYRGRPIVSASASLTIFPAMFNPEEHSCSLEGNPVTCINLSFCLNASGKHVPDSIGFTVELQLDWQKQKGGVRRALFLASRQATLTQTLLIQNGAREDCREMKIYLRNESEFRDKLSPIHIALNFSLDPQAPVDSHGLRPVLHYQSKSRIEDKAQILLDCGEDNICVPDLQLEVFGEQNHVYLGDKNSLNLTFHAQNVGEGGAYEAELRVTAPPEAEYSGLVRHPGNFSSLSCDYFAVNQSRLLVCDLGNPMKAGASLWGGLRFTVPHLRDTKKTIQFDFQILSKNLNNSQSDVVSFRLSVEAQAQVSLNGVSKPEAVLFPMSDWHPQDQPQEEGDVGPAVHHVYELINLGPSSISQGVLELSCPHALDGQQLLYVTRVTGLSNCTTSHPPNPEGLELDPEGSQHHRLQRRDVPGRSPASSGPQILKCPEAECFKLRCELGPLHRQESRSLQLHFRVWAKTFLQREHQPFSLQCEAVYEALKMPYKILPRQLPQKALQVATAVQWIKAEGSHGVPLWIIILAILIGLLLLGLLIYILYKLGFFKRSLPYGTAMEKAQLKPPATSDA</sequence>
<evidence type="ECO:0000250" key="1"/>
<evidence type="ECO:0000250" key="2">
    <source>
        <dbReference type="UniProtKB" id="P08648"/>
    </source>
</evidence>
<evidence type="ECO:0000255" key="3"/>
<evidence type="ECO:0000255" key="4">
    <source>
        <dbReference type="PROSITE-ProRule" id="PRU00803"/>
    </source>
</evidence>
<evidence type="ECO:0000256" key="5">
    <source>
        <dbReference type="SAM" id="MobiDB-lite"/>
    </source>
</evidence>
<evidence type="ECO:0000305" key="6"/>
<evidence type="ECO:0000312" key="7">
    <source>
        <dbReference type="EMBL" id="AAA80572.1"/>
    </source>
</evidence>
<evidence type="ECO:0000312" key="8">
    <source>
        <dbReference type="Proteomes" id="UP000009136"/>
    </source>
</evidence>
<dbReference type="EMBL" id="U10866">
    <property type="protein sequence ID" value="AAA80572.1"/>
    <property type="molecule type" value="mRNA"/>
</dbReference>
<dbReference type="PIR" id="I46060">
    <property type="entry name" value="I46060"/>
</dbReference>
<dbReference type="SMR" id="Q27977"/>
<dbReference type="CORUM" id="Q27977"/>
<dbReference type="STRING" id="9913.ENSBTAP00000018261"/>
<dbReference type="GlyCosmos" id="Q27977">
    <property type="glycosylation" value="4 sites, No reported glycans"/>
</dbReference>
<dbReference type="GlyGen" id="Q27977">
    <property type="glycosylation" value="14 sites"/>
</dbReference>
<dbReference type="PaxDb" id="9913-ENSBTAP00000018261"/>
<dbReference type="Ensembl" id="ENSBTAT00000018261.7">
    <property type="protein sequence ID" value="ENSBTAP00000018261.6"/>
    <property type="gene ID" value="ENSBTAG00000013745.7"/>
</dbReference>
<dbReference type="VEuPathDB" id="HostDB:ENSBTAG00000013745"/>
<dbReference type="VGNC" id="VGNC:30317">
    <property type="gene designation" value="ITGA5"/>
</dbReference>
<dbReference type="eggNOG" id="KOG3637">
    <property type="taxonomic scope" value="Eukaryota"/>
</dbReference>
<dbReference type="GeneTree" id="ENSGT00940000158061"/>
<dbReference type="HOGENOM" id="CLU_004111_4_0_1"/>
<dbReference type="InParanoid" id="Q27977"/>
<dbReference type="OMA" id="DECFQLH"/>
<dbReference type="OrthoDB" id="5317514at2759"/>
<dbReference type="TreeFam" id="TF105391"/>
<dbReference type="Reactome" id="R-BTA-1566948">
    <property type="pathway name" value="Elastic fibre formation"/>
</dbReference>
<dbReference type="Reactome" id="R-BTA-1566977">
    <property type="pathway name" value="Fibronectin matrix formation"/>
</dbReference>
<dbReference type="Reactome" id="R-BTA-202733">
    <property type="pathway name" value="Cell surface interactions at the vascular wall"/>
</dbReference>
<dbReference type="Reactome" id="R-BTA-216083">
    <property type="pathway name" value="Integrin cell surface interactions"/>
</dbReference>
<dbReference type="Reactome" id="R-BTA-9634597">
    <property type="pathway name" value="GPER1 signaling"/>
</dbReference>
<dbReference type="Reactome" id="R-BTA-9860927">
    <property type="pathway name" value="Turbulent (oscillatory, disturbed) flow shear stress activates signaling by PIEZO1 and integrins in endothelial cells"/>
</dbReference>
<dbReference type="Proteomes" id="UP000009136">
    <property type="component" value="Chromosome 5"/>
</dbReference>
<dbReference type="Bgee" id="ENSBTAG00000013745">
    <property type="expression patterns" value="Expressed in trachea and 105 other cell types or tissues"/>
</dbReference>
<dbReference type="GO" id="GO:0009986">
    <property type="term" value="C:cell surface"/>
    <property type="evidence" value="ECO:0000250"/>
    <property type="project" value="UniProtKB"/>
</dbReference>
<dbReference type="GO" id="GO:0005911">
    <property type="term" value="C:cell-cell junction"/>
    <property type="evidence" value="ECO:0007669"/>
    <property type="project" value="Ensembl"/>
</dbReference>
<dbReference type="GO" id="GO:0031410">
    <property type="term" value="C:cytoplasmic vesicle"/>
    <property type="evidence" value="ECO:0007669"/>
    <property type="project" value="Ensembl"/>
</dbReference>
<dbReference type="GO" id="GO:0005783">
    <property type="term" value="C:endoplasmic reticulum"/>
    <property type="evidence" value="ECO:0007669"/>
    <property type="project" value="Ensembl"/>
</dbReference>
<dbReference type="GO" id="GO:0009897">
    <property type="term" value="C:external side of plasma membrane"/>
    <property type="evidence" value="ECO:0000318"/>
    <property type="project" value="GO_Central"/>
</dbReference>
<dbReference type="GO" id="GO:0005925">
    <property type="term" value="C:focal adhesion"/>
    <property type="evidence" value="ECO:0000250"/>
    <property type="project" value="UniProtKB"/>
</dbReference>
<dbReference type="GO" id="GO:0005794">
    <property type="term" value="C:Golgi apparatus"/>
    <property type="evidence" value="ECO:0007669"/>
    <property type="project" value="Ensembl"/>
</dbReference>
<dbReference type="GO" id="GO:0034674">
    <property type="term" value="C:integrin alpha5-beta1 complex"/>
    <property type="evidence" value="ECO:0007669"/>
    <property type="project" value="Ensembl"/>
</dbReference>
<dbReference type="GO" id="GO:0008305">
    <property type="term" value="C:integrin complex"/>
    <property type="evidence" value="ECO:0000318"/>
    <property type="project" value="GO_Central"/>
</dbReference>
<dbReference type="GO" id="GO:0005886">
    <property type="term" value="C:plasma membrane"/>
    <property type="evidence" value="ECO:0000250"/>
    <property type="project" value="UniProtKB"/>
</dbReference>
<dbReference type="GO" id="GO:0032587">
    <property type="term" value="C:ruffle membrane"/>
    <property type="evidence" value="ECO:0007669"/>
    <property type="project" value="Ensembl"/>
</dbReference>
<dbReference type="GO" id="GO:0045202">
    <property type="term" value="C:synapse"/>
    <property type="evidence" value="ECO:0007669"/>
    <property type="project" value="Ensembl"/>
</dbReference>
<dbReference type="GO" id="GO:0005509">
    <property type="term" value="F:calcium ion binding"/>
    <property type="evidence" value="ECO:0007669"/>
    <property type="project" value="Ensembl"/>
</dbReference>
<dbReference type="GO" id="GO:0005178">
    <property type="term" value="F:integrin binding"/>
    <property type="evidence" value="ECO:0000318"/>
    <property type="project" value="GO_Central"/>
</dbReference>
<dbReference type="GO" id="GO:0038023">
    <property type="term" value="F:signaling receptor activity"/>
    <property type="evidence" value="ECO:0007669"/>
    <property type="project" value="Ensembl"/>
</dbReference>
<dbReference type="GO" id="GO:0001525">
    <property type="term" value="P:angiogenesis"/>
    <property type="evidence" value="ECO:0000318"/>
    <property type="project" value="GO_Central"/>
</dbReference>
<dbReference type="GO" id="GO:0023035">
    <property type="term" value="P:CD40 signaling pathway"/>
    <property type="evidence" value="ECO:0007669"/>
    <property type="project" value="Ensembl"/>
</dbReference>
<dbReference type="GO" id="GO:0033627">
    <property type="term" value="P:cell adhesion mediated by integrin"/>
    <property type="evidence" value="ECO:0000250"/>
    <property type="project" value="UniProtKB"/>
</dbReference>
<dbReference type="GO" id="GO:0098609">
    <property type="term" value="P:cell-cell adhesion"/>
    <property type="evidence" value="ECO:0000318"/>
    <property type="project" value="GO_Central"/>
</dbReference>
<dbReference type="GO" id="GO:0033631">
    <property type="term" value="P:cell-cell adhesion mediated by integrin"/>
    <property type="evidence" value="ECO:0007669"/>
    <property type="project" value="Ensembl"/>
</dbReference>
<dbReference type="GO" id="GO:0031589">
    <property type="term" value="P:cell-substrate adhesion"/>
    <property type="evidence" value="ECO:0007669"/>
    <property type="project" value="Ensembl"/>
</dbReference>
<dbReference type="GO" id="GO:0007044">
    <property type="term" value="P:cell-substrate junction assembly"/>
    <property type="evidence" value="ECO:0007669"/>
    <property type="project" value="Ensembl"/>
</dbReference>
<dbReference type="GO" id="GO:0035987">
    <property type="term" value="P:endodermal cell differentiation"/>
    <property type="evidence" value="ECO:0007669"/>
    <property type="project" value="Ensembl"/>
</dbReference>
<dbReference type="GO" id="GO:0007157">
    <property type="term" value="P:heterophilic cell-cell adhesion via plasma membrane cell adhesion molecules"/>
    <property type="evidence" value="ECO:0007669"/>
    <property type="project" value="Ensembl"/>
</dbReference>
<dbReference type="GO" id="GO:0034113">
    <property type="term" value="P:heterotypic cell-cell adhesion"/>
    <property type="evidence" value="ECO:0007669"/>
    <property type="project" value="Ensembl"/>
</dbReference>
<dbReference type="GO" id="GO:0007229">
    <property type="term" value="P:integrin-mediated signaling pathway"/>
    <property type="evidence" value="ECO:0000318"/>
    <property type="project" value="GO_Central"/>
</dbReference>
<dbReference type="GO" id="GO:0007159">
    <property type="term" value="P:leukocyte cell-cell adhesion"/>
    <property type="evidence" value="ECO:0007669"/>
    <property type="project" value="Ensembl"/>
</dbReference>
<dbReference type="GO" id="GO:0007613">
    <property type="term" value="P:memory"/>
    <property type="evidence" value="ECO:0007669"/>
    <property type="project" value="Ensembl"/>
</dbReference>
<dbReference type="GO" id="GO:2000811">
    <property type="term" value="P:negative regulation of anoikis"/>
    <property type="evidence" value="ECO:0007669"/>
    <property type="project" value="Ensembl"/>
</dbReference>
<dbReference type="GO" id="GO:1903672">
    <property type="term" value="P:positive regulation of sprouting angiogenesis"/>
    <property type="evidence" value="ECO:0007669"/>
    <property type="project" value="Ensembl"/>
</dbReference>
<dbReference type="GO" id="GO:1900748">
    <property type="term" value="P:positive regulation of vascular endothelial growth factor signaling pathway"/>
    <property type="evidence" value="ECO:0007669"/>
    <property type="project" value="Ensembl"/>
</dbReference>
<dbReference type="GO" id="GO:0014850">
    <property type="term" value="P:response to muscle activity"/>
    <property type="evidence" value="ECO:0007669"/>
    <property type="project" value="Ensembl"/>
</dbReference>
<dbReference type="GO" id="GO:0035313">
    <property type="term" value="P:wound healing, spreading of epidermal cells"/>
    <property type="evidence" value="ECO:0007669"/>
    <property type="project" value="Ensembl"/>
</dbReference>
<dbReference type="FunFam" id="2.130.10.130:FF:000003">
    <property type="entry name" value="Integrin alpha V"/>
    <property type="match status" value="1"/>
</dbReference>
<dbReference type="FunFam" id="2.60.40.1510:FF:000001">
    <property type="entry name" value="Integrin alpha V"/>
    <property type="match status" value="1"/>
</dbReference>
<dbReference type="FunFam" id="2.60.40.1530:FF:000006">
    <property type="entry name" value="Integrin subunit alpha 5"/>
    <property type="match status" value="1"/>
</dbReference>
<dbReference type="FunFam" id="1.20.5.930:FF:000001">
    <property type="entry name" value="Integrin subunit alpha V"/>
    <property type="match status" value="1"/>
</dbReference>
<dbReference type="FunFam" id="2.60.40.1460:FF:000001">
    <property type="entry name" value="Integrin, alpha V"/>
    <property type="match status" value="1"/>
</dbReference>
<dbReference type="Gene3D" id="1.20.5.930">
    <property type="entry name" value="Bicelle-embedded integrin alpha(iib) transmembrane segment"/>
    <property type="match status" value="1"/>
</dbReference>
<dbReference type="Gene3D" id="2.130.10.130">
    <property type="entry name" value="Integrin alpha, N-terminal"/>
    <property type="match status" value="1"/>
</dbReference>
<dbReference type="Gene3D" id="2.60.40.1460">
    <property type="entry name" value="Integrin domains. Chain A, domain 2"/>
    <property type="match status" value="1"/>
</dbReference>
<dbReference type="Gene3D" id="2.60.40.1510">
    <property type="entry name" value="ntegrin, alpha v. Chain A, domain 3"/>
    <property type="match status" value="1"/>
</dbReference>
<dbReference type="Gene3D" id="2.60.40.1530">
    <property type="entry name" value="ntegrin, alpha v. Chain A, domain 4"/>
    <property type="match status" value="1"/>
</dbReference>
<dbReference type="InterPro" id="IPR013517">
    <property type="entry name" value="FG-GAP"/>
</dbReference>
<dbReference type="InterPro" id="IPR013519">
    <property type="entry name" value="Int_alpha_beta-p"/>
</dbReference>
<dbReference type="InterPro" id="IPR000413">
    <property type="entry name" value="Integrin_alpha"/>
</dbReference>
<dbReference type="InterPro" id="IPR018184">
    <property type="entry name" value="Integrin_alpha_C_CS"/>
</dbReference>
<dbReference type="InterPro" id="IPR013649">
    <property type="entry name" value="Integrin_alpha_Ig-like_1"/>
</dbReference>
<dbReference type="InterPro" id="IPR048285">
    <property type="entry name" value="Integrin_alpha_Ig-like_2"/>
</dbReference>
<dbReference type="InterPro" id="IPR048286">
    <property type="entry name" value="Integrin_alpha_Ig-like_3"/>
</dbReference>
<dbReference type="InterPro" id="IPR028994">
    <property type="entry name" value="Integrin_alpha_N"/>
</dbReference>
<dbReference type="InterPro" id="IPR032695">
    <property type="entry name" value="Integrin_dom_sf"/>
</dbReference>
<dbReference type="PANTHER" id="PTHR23220">
    <property type="entry name" value="INTEGRIN ALPHA"/>
    <property type="match status" value="1"/>
</dbReference>
<dbReference type="PANTHER" id="PTHR23220:SF3">
    <property type="entry name" value="INTEGRIN ALPHA-5"/>
    <property type="match status" value="1"/>
</dbReference>
<dbReference type="Pfam" id="PF01839">
    <property type="entry name" value="FG-GAP"/>
    <property type="match status" value="2"/>
</dbReference>
<dbReference type="Pfam" id="PF08441">
    <property type="entry name" value="Integrin_A_Ig_1"/>
    <property type="match status" value="1"/>
</dbReference>
<dbReference type="Pfam" id="PF20805">
    <property type="entry name" value="Integrin_A_Ig_2"/>
    <property type="match status" value="1"/>
</dbReference>
<dbReference type="Pfam" id="PF20806">
    <property type="entry name" value="Integrin_A_Ig_3"/>
    <property type="match status" value="1"/>
</dbReference>
<dbReference type="PRINTS" id="PR01185">
    <property type="entry name" value="INTEGRINA"/>
</dbReference>
<dbReference type="SMART" id="SM00191">
    <property type="entry name" value="Int_alpha"/>
    <property type="match status" value="5"/>
</dbReference>
<dbReference type="SUPFAM" id="SSF69318">
    <property type="entry name" value="Integrin alpha N-terminal domain"/>
    <property type="match status" value="1"/>
</dbReference>
<dbReference type="SUPFAM" id="SSF69179">
    <property type="entry name" value="Integrin domains"/>
    <property type="match status" value="3"/>
</dbReference>
<dbReference type="PROSITE" id="PS51470">
    <property type="entry name" value="FG_GAP"/>
    <property type="match status" value="7"/>
</dbReference>
<feature type="chain" id="PRO_0000016247" description="Integrin alpha-5">
    <location>
        <begin position="1"/>
        <end position="1164"/>
    </location>
</feature>
<feature type="signal peptide" evidence="2">
    <location>
        <begin position="1"/>
        <end status="unknown"/>
    </location>
</feature>
<feature type="chain" id="PRO_0000458353" description="Integrin alpha-5 heavy chain" evidence="2">
    <location>
        <begin status="unknown"/>
        <end position="1009"/>
    </location>
</feature>
<feature type="chain" id="PRO_0000458354" description="Integrin alpha-5 light chain" evidence="2">
    <location>
        <begin position="1010"/>
        <end position="1164"/>
    </location>
</feature>
<feature type="topological domain" description="Extracellular" evidence="6">
    <location>
        <begin status="unknown"/>
        <end position="1113"/>
    </location>
</feature>
<feature type="transmembrane region" description="Helical" evidence="3">
    <location>
        <begin position="1114"/>
        <end position="1134"/>
    </location>
</feature>
<feature type="topological domain" description="Cytoplasmic" evidence="6">
    <location>
        <begin position="1135"/>
        <end position="1164"/>
    </location>
</feature>
<feature type="repeat" description="FG-GAP 1" evidence="4">
    <location>
        <begin position="156"/>
        <end position="221"/>
    </location>
</feature>
<feature type="repeat" description="FG-GAP 2" evidence="4">
    <location>
        <begin position="241"/>
        <end position="301"/>
    </location>
</feature>
<feature type="repeat" description="FG-GAP 3" evidence="4">
    <location>
        <begin position="306"/>
        <end position="358"/>
    </location>
</feature>
<feature type="repeat" description="FG-GAP 4" evidence="4">
    <location>
        <begin position="372"/>
        <end position="424"/>
    </location>
</feature>
<feature type="repeat" description="FG-GAP 5" evidence="4">
    <location>
        <begin position="425"/>
        <end position="490"/>
    </location>
</feature>
<feature type="repeat" description="FG-GAP 6" evidence="4">
    <location>
        <begin position="491"/>
        <end position="550"/>
    </location>
</feature>
<feature type="repeat" description="FG-GAP 7" evidence="4">
    <location>
        <begin position="554"/>
        <end position="617"/>
    </location>
</feature>
<feature type="region of interest" description="Disordered" evidence="5">
    <location>
        <begin position="1"/>
        <end position="119"/>
    </location>
</feature>
<feature type="region of interest" description="Disordered" evidence="5">
    <location>
        <begin position="983"/>
        <end position="1022"/>
    </location>
</feature>
<feature type="region of interest" description="Interaction with HPS5" evidence="2">
    <location>
        <begin position="1136"/>
        <end position="1143"/>
    </location>
</feature>
<feature type="short sequence motif" description="GFFKR motif" evidence="6">
    <location>
        <begin position="1139"/>
        <end position="1143"/>
    </location>
</feature>
<feature type="compositionally biased region" description="Basic and acidic residues" evidence="5">
    <location>
        <begin position="1"/>
        <end position="14"/>
    </location>
</feature>
<feature type="compositionally biased region" description="Low complexity" evidence="5">
    <location>
        <begin position="81"/>
        <end position="90"/>
    </location>
</feature>
<feature type="binding site" evidence="2">
    <location>
        <position position="375"/>
    </location>
    <ligand>
        <name>a protein</name>
        <dbReference type="ChEBI" id="CHEBI:16541"/>
    </ligand>
    <ligandPart>
        <name>L-arginine residue</name>
        <dbReference type="ChEBI" id="CHEBI:29965"/>
        <note>Arg of R-G-D sequence recognized in fibronectin and fibrinogen</note>
    </ligandPart>
</feature>
<feature type="binding site" evidence="2">
    <location>
        <position position="382"/>
    </location>
    <ligand>
        <name>a protein</name>
        <dbReference type="ChEBI" id="CHEBI:16541"/>
    </ligand>
    <ligandPart>
        <name>L-arginine residue</name>
        <dbReference type="ChEBI" id="CHEBI:29965"/>
        <note>Arg of R-G-D sequence recognized in fibronectin and fibrinogen</note>
    </ligandPart>
</feature>
<feature type="binding site" evidence="2">
    <location>
        <position position="393"/>
    </location>
    <ligand>
        <name>Ca(2+)</name>
        <dbReference type="ChEBI" id="CHEBI:29108"/>
        <label>1</label>
    </ligand>
</feature>
<feature type="binding site" evidence="2">
    <location>
        <position position="395"/>
    </location>
    <ligand>
        <name>Ca(2+)</name>
        <dbReference type="ChEBI" id="CHEBI:29108"/>
        <label>1</label>
    </ligand>
</feature>
<feature type="binding site" evidence="2">
    <location>
        <position position="397"/>
    </location>
    <ligand>
        <name>Ca(2+)</name>
        <dbReference type="ChEBI" id="CHEBI:29108"/>
        <label>1</label>
    </ligand>
</feature>
<feature type="binding site" evidence="2">
    <location>
        <position position="401"/>
    </location>
    <ligand>
        <name>Ca(2+)</name>
        <dbReference type="ChEBI" id="CHEBI:29108"/>
        <label>1</label>
    </ligand>
</feature>
<feature type="binding site" evidence="2">
    <location>
        <position position="447"/>
    </location>
    <ligand>
        <name>Ca(2+)</name>
        <dbReference type="ChEBI" id="CHEBI:29108"/>
        <label>2</label>
    </ligand>
</feature>
<feature type="binding site" evidence="2">
    <location>
        <position position="449"/>
    </location>
    <ligand>
        <name>Ca(2+)</name>
        <dbReference type="ChEBI" id="CHEBI:29108"/>
        <label>2</label>
    </ligand>
</feature>
<feature type="binding site" evidence="2">
    <location>
        <position position="451"/>
    </location>
    <ligand>
        <name>Ca(2+)</name>
        <dbReference type="ChEBI" id="CHEBI:29108"/>
        <label>2</label>
    </ligand>
</feature>
<feature type="binding site" evidence="2">
    <location>
        <position position="453"/>
    </location>
    <ligand>
        <name>Ca(2+)</name>
        <dbReference type="ChEBI" id="CHEBI:29108"/>
        <label>2</label>
    </ligand>
</feature>
<feature type="binding site" evidence="2">
    <location>
        <position position="455"/>
    </location>
    <ligand>
        <name>Ca(2+)</name>
        <dbReference type="ChEBI" id="CHEBI:29108"/>
        <label>2</label>
    </ligand>
</feature>
<feature type="binding site" evidence="2">
    <location>
        <position position="514"/>
    </location>
    <ligand>
        <name>Ca(2+)</name>
        <dbReference type="ChEBI" id="CHEBI:29108"/>
        <label>3</label>
    </ligand>
</feature>
<feature type="binding site" evidence="2">
    <location>
        <position position="516"/>
    </location>
    <ligand>
        <name>Ca(2+)</name>
        <dbReference type="ChEBI" id="CHEBI:29108"/>
        <label>3</label>
    </ligand>
</feature>
<feature type="binding site" evidence="2">
    <location>
        <position position="518"/>
    </location>
    <ligand>
        <name>Ca(2+)</name>
        <dbReference type="ChEBI" id="CHEBI:29108"/>
        <label>3</label>
    </ligand>
</feature>
<feature type="binding site" evidence="2">
    <location>
        <position position="520"/>
    </location>
    <ligand>
        <name>Ca(2+)</name>
        <dbReference type="ChEBI" id="CHEBI:29108"/>
        <label>3</label>
    </ligand>
</feature>
<feature type="binding site" evidence="2">
    <location>
        <position position="522"/>
    </location>
    <ligand>
        <name>Ca(2+)</name>
        <dbReference type="ChEBI" id="CHEBI:29108"/>
        <label>3</label>
    </ligand>
</feature>
<feature type="binding site" evidence="2">
    <location>
        <position position="578"/>
    </location>
    <ligand>
        <name>Ca(2+)</name>
        <dbReference type="ChEBI" id="CHEBI:29108"/>
        <label>4</label>
    </ligand>
</feature>
<feature type="binding site" evidence="2">
    <location>
        <position position="580"/>
    </location>
    <ligand>
        <name>Ca(2+)</name>
        <dbReference type="ChEBI" id="CHEBI:29108"/>
        <label>4</label>
    </ligand>
</feature>
<feature type="binding site" evidence="2">
    <location>
        <position position="582"/>
    </location>
    <ligand>
        <name>Ca(2+)</name>
        <dbReference type="ChEBI" id="CHEBI:29108"/>
        <label>4</label>
    </ligand>
</feature>
<feature type="binding site" evidence="2">
    <location>
        <position position="584"/>
    </location>
    <ligand>
        <name>Ca(2+)</name>
        <dbReference type="ChEBI" id="CHEBI:29108"/>
        <label>4</label>
    </ligand>
</feature>
<feature type="binding site" evidence="2">
    <location>
        <position position="586"/>
    </location>
    <ligand>
        <name>Ca(2+)</name>
        <dbReference type="ChEBI" id="CHEBI:29108"/>
        <label>4</label>
    </ligand>
</feature>
<feature type="modified residue" description="Phosphoserine" evidence="2">
    <location>
        <position position="240"/>
    </location>
</feature>
<feature type="glycosylation site" description="N-linked (GlcNAc...) asparagine" evidence="3">
    <location>
        <position position="197"/>
    </location>
</feature>
<feature type="glycosylation site" description="N-linked (GlcNAc...) asparagine" evidence="3">
    <location>
        <position position="295"/>
    </location>
</feature>
<feature type="glycosylation site" description="N-linked (GlcNAc...) asparagine" evidence="3">
    <location>
        <position position="410"/>
    </location>
</feature>
<feature type="glycosylation site" description="N-linked (GlcNAc...) asparagine" evidence="3">
    <location>
        <position position="420"/>
    </location>
</feature>
<feature type="glycosylation site" description="N-linked (GlcNAc...) asparagine" evidence="3">
    <location>
        <position position="429"/>
    </location>
</feature>
<feature type="glycosylation site" description="N-linked (GlcNAc...) asparagine" evidence="3">
    <location>
        <position position="637"/>
    </location>
</feature>
<feature type="glycosylation site" description="N-linked (GlcNAc...) asparagine" evidence="3">
    <location>
        <position position="643"/>
    </location>
</feature>
<feature type="glycosylation site" description="N-linked (GlcNAc...) asparagine" evidence="3">
    <location>
        <position position="706"/>
    </location>
</feature>
<feature type="glycosylation site" description="N-linked (GlcNAc...) asparagine" evidence="3">
    <location>
        <position position="722"/>
    </location>
</feature>
<feature type="glycosylation site" description="N-linked (GlcNAc...) asparagine" evidence="3">
    <location>
        <position position="788"/>
    </location>
</feature>
<feature type="glycosylation site" description="N-linked (GlcNAc...) asparagine" evidence="3">
    <location>
        <position position="825"/>
    </location>
</feature>
<feature type="glycosylation site" description="N-linked (GlcNAc...) asparagine" evidence="3">
    <location>
        <position position="837"/>
    </location>
</feature>
<feature type="glycosylation site" description="N-linked (GlcNAc...) asparagine" evidence="3">
    <location>
        <position position="886"/>
    </location>
</feature>
<feature type="glycosylation site" description="N-linked (GlcNAc...) asparagine" evidence="3">
    <location>
        <position position="982"/>
    </location>
</feature>
<feature type="disulfide bond" evidence="2">
    <location>
        <begin position="212"/>
        <end position="221"/>
    </location>
</feature>
<feature type="disulfide bond" evidence="2">
    <location>
        <begin position="269"/>
        <end position="289"/>
    </location>
</feature>
<feature type="disulfide bond" evidence="2">
    <location>
        <begin position="305"/>
        <end position="318"/>
    </location>
</feature>
<feature type="disulfide bond" evidence="2">
    <location>
        <begin position="626"/>
        <end position="635"/>
    </location>
</feature>
<feature type="disulfide bond" evidence="2">
    <location>
        <begin position="641"/>
        <end position="697"/>
    </location>
</feature>
<feature type="disulfide bond" evidence="2">
    <location>
        <begin position="758"/>
        <end position="764"/>
    </location>
</feature>
<feature type="disulfide bond" evidence="2">
    <location>
        <begin position="831"/>
        <end position="844"/>
    </location>
</feature>
<feature type="disulfide bond" evidence="2">
    <location>
        <begin position="962"/>
        <end position="1072"/>
    </location>
</feature>
<feature type="disulfide bond" description="Interchain (between heavy and light chains)" evidence="2">
    <location>
        <begin position="983"/>
        <end position="1036"/>
    </location>
</feature>
<feature type="disulfide bond" evidence="2">
    <location>
        <begin position="1026"/>
        <end position="1031"/>
    </location>
</feature>
<feature type="sequence conflict" description="In Ref. 2; AAA80572." evidence="6" ref="2">
    <original>T</original>
    <variation>I</variation>
    <location>
        <position position="870"/>
    </location>
</feature>
<feature type="sequence conflict" description="In Ref. 2; AAA80572." evidence="6" ref="2">
    <original>S</original>
    <variation>V</variation>
    <location>
        <position position="888"/>
    </location>
</feature>
<feature type="sequence conflict" description="In Ref. 2; AAA80572." evidence="6" ref="2">
    <original>DVP</original>
    <variation>MFL</variation>
    <location>
        <begin position="1010"/>
        <end position="1012"/>
    </location>
</feature>
<feature type="sequence conflict" description="In Ref. 2; AAA80572." evidence="6" ref="2">
    <original>T</original>
    <variation>A</variation>
    <location>
        <position position="1059"/>
    </location>
</feature>
<feature type="sequence conflict" description="In Ref. 2; AAA80572." evidence="6" ref="2">
    <original>KLG</original>
    <variation>NLF</variation>
    <location>
        <begin position="1137"/>
        <end position="1139"/>
    </location>
</feature>
<keyword id="KW-0106">Calcium</keyword>
<keyword id="KW-0130">Cell adhesion</keyword>
<keyword id="KW-0965">Cell junction</keyword>
<keyword id="KW-1003">Cell membrane</keyword>
<keyword id="KW-0165">Cleavage on pair of basic residues</keyword>
<keyword id="KW-1015">Disulfide bond</keyword>
<keyword id="KW-0325">Glycoprotein</keyword>
<keyword id="KW-0401">Integrin</keyword>
<keyword id="KW-0472">Membrane</keyword>
<keyword id="KW-0479">Metal-binding</keyword>
<keyword id="KW-0597">Phosphoprotein</keyword>
<keyword id="KW-0675">Receptor</keyword>
<keyword id="KW-1185">Reference proteome</keyword>
<keyword id="KW-0677">Repeat</keyword>
<keyword id="KW-0732">Signal</keyword>
<keyword id="KW-0812">Transmembrane</keyword>
<keyword id="KW-1133">Transmembrane helix</keyword>
<protein>
    <recommendedName>
        <fullName>Integrin alpha-5</fullName>
    </recommendedName>
    <alternativeName>
        <fullName>Fibronectin receptor subunit alpha</fullName>
    </alternativeName>
    <alternativeName>
        <fullName>Integrin alpha-F</fullName>
    </alternativeName>
    <alternativeName>
        <fullName>VLA-5</fullName>
    </alternativeName>
    <component>
        <recommendedName>
            <fullName>Integrin alpha-5 heavy chain</fullName>
        </recommendedName>
    </component>
    <component>
        <recommendedName>
            <fullName>Integrin alpha-5 light chain</fullName>
        </recommendedName>
    </component>
</protein>
<gene>
    <name type="primary">ITGA5</name>
</gene>
<accession>Q27977</accession>
<accession>F1MK44</accession>
<organism>
    <name type="scientific">Bos taurus</name>
    <name type="common">Bovine</name>
    <dbReference type="NCBI Taxonomy" id="9913"/>
    <lineage>
        <taxon>Eukaryota</taxon>
        <taxon>Metazoa</taxon>
        <taxon>Chordata</taxon>
        <taxon>Craniata</taxon>
        <taxon>Vertebrata</taxon>
        <taxon>Euteleostomi</taxon>
        <taxon>Mammalia</taxon>
        <taxon>Eutheria</taxon>
        <taxon>Laurasiatheria</taxon>
        <taxon>Artiodactyla</taxon>
        <taxon>Ruminantia</taxon>
        <taxon>Pecora</taxon>
        <taxon>Bovidae</taxon>
        <taxon>Bovinae</taxon>
        <taxon>Bos</taxon>
    </lineage>
</organism>
<proteinExistence type="evidence at transcript level"/>
<name>ITA5_BOVIN</name>
<reference evidence="8" key="1">
    <citation type="submission" date="2018-03" db="EMBL/GenBank/DDBJ databases">
        <title>ARS-UCD1.2.</title>
        <authorList>
            <person name="Rosen B.D."/>
            <person name="Bickhart D.M."/>
            <person name="Koren S."/>
            <person name="Schnabel R.D."/>
            <person name="Hall R."/>
            <person name="Zimin A."/>
            <person name="Dreischer C."/>
            <person name="Schultheiss S."/>
            <person name="Schroeder S.G."/>
            <person name="Elsik C.G."/>
            <person name="Couldrey C."/>
            <person name="Liu G.E."/>
            <person name="Van Tassell C.P."/>
            <person name="Phillippy A.M."/>
            <person name="Smith T.P.L."/>
            <person name="Medrano J.F."/>
        </authorList>
    </citation>
    <scope>NUCLEOTIDE SEQUENCE [LARGE SCALE GENOMIC DNA]</scope>
    <source>
        <strain evidence="8">Hereford</strain>
    </source>
</reference>
<reference evidence="7" key="2">
    <citation type="journal article" date="1995" name="Biol. Reprod.">
        <title>Fibronectin receptors in preimplantation development: cloning, expression, and localization of the alpha 5 and beta 1 integrin subunits in bovine trophoblast.</title>
        <authorList>
            <person name="Maclaren L.A."/>
            <person name="Wildeman A.G."/>
        </authorList>
    </citation>
    <scope>NUCLEOTIDE SEQUENCE [MRNA] OF 758-1142</scope>
</reference>
<comment type="function">
    <text evidence="2">Integrin alpha-5/beta-1 (ITGA5:ITGB1) is a receptor for fibronectin and fibrinogen. It recognizes the sequence R-G-D in its ligands. ITGA5:ITGB1 binds to PLA2G2A via a site (site 2) which is distinct from the classical ligand-binding site (site 1) and this induces integrin conformational changes and enhanced ligand binding to site 1. ITGA5:ITGB1 acts as a receptor for fibrillin-1 (FBN1) and mediates R-G-D-dependent cell adhesion to FBN1. ITGA5:ITGB1 acts as a receptor for fibronectin (FN1) and mediates R-G-D-dependent cell adhesion to FN1 (By similarity). ITGA5:ITGB1 is a receptor for IL1B and binding is essential for IL1B signaling. ITGA5:ITGB3 is a receptor for soluble CD40LG and is required for CD40/CD40LG signaling (By similarity).</text>
</comment>
<comment type="subunit">
    <text evidence="2">Heterodimer of an alpha and a beta subunit. The alpha subunit is composed of a heavy and a light chain linked by a disulfide bond. Alpha-5 associates with beta-1. Interacts with NISCH. Interacts with HPS5. Interacts with RAB21 and COMP. Interacts with CIB1. ITGA5:ITGB1 interacts with CCN3. ITGA5:ITGB1 interacts with FBN1. ITGA5:ITGB1 interacts with IL1B. ITGA5:ITGB1 interacts with ACE2. ITGA5:ITGB1 interacts with SELP (By similarity). Interacts with ANGPT2. ITGA5:ITGB1 interacts with IGFBP2 (By similarity). ITGA5:ITGB1 interacts with IGFBP1 (By similarity).</text>
</comment>
<comment type="subcellular location">
    <subcellularLocation>
        <location evidence="2">Cell membrane</location>
        <topology evidence="3">Single-pass type I membrane protein</topology>
    </subcellularLocation>
    <subcellularLocation>
        <location evidence="2">Cell junction</location>
        <location evidence="2">Focal adhesion</location>
    </subcellularLocation>
</comment>
<comment type="PTM">
    <text evidence="1">Proteolytic cleavage by PCSK5 mediates activation of the precursor.</text>
</comment>
<comment type="similarity">
    <text evidence="6">Belongs to the integrin alpha chain family.</text>
</comment>